<reference key="1">
    <citation type="journal article" date="2002" name="Nature">
        <title>The genome sequence of Schizosaccharomyces pombe.</title>
        <authorList>
            <person name="Wood V."/>
            <person name="Gwilliam R."/>
            <person name="Rajandream M.A."/>
            <person name="Lyne M.H."/>
            <person name="Lyne R."/>
            <person name="Stewart A."/>
            <person name="Sgouros J.G."/>
            <person name="Peat N."/>
            <person name="Hayles J."/>
            <person name="Baker S.G."/>
            <person name="Basham D."/>
            <person name="Bowman S."/>
            <person name="Brooks K."/>
            <person name="Brown D."/>
            <person name="Brown S."/>
            <person name="Chillingworth T."/>
            <person name="Churcher C.M."/>
            <person name="Collins M."/>
            <person name="Connor R."/>
            <person name="Cronin A."/>
            <person name="Davis P."/>
            <person name="Feltwell T."/>
            <person name="Fraser A."/>
            <person name="Gentles S."/>
            <person name="Goble A."/>
            <person name="Hamlin N."/>
            <person name="Harris D.E."/>
            <person name="Hidalgo J."/>
            <person name="Hodgson G."/>
            <person name="Holroyd S."/>
            <person name="Hornsby T."/>
            <person name="Howarth S."/>
            <person name="Huckle E.J."/>
            <person name="Hunt S."/>
            <person name="Jagels K."/>
            <person name="James K.D."/>
            <person name="Jones L."/>
            <person name="Jones M."/>
            <person name="Leather S."/>
            <person name="McDonald S."/>
            <person name="McLean J."/>
            <person name="Mooney P."/>
            <person name="Moule S."/>
            <person name="Mungall K.L."/>
            <person name="Murphy L.D."/>
            <person name="Niblett D."/>
            <person name="Odell C."/>
            <person name="Oliver K."/>
            <person name="O'Neil S."/>
            <person name="Pearson D."/>
            <person name="Quail M.A."/>
            <person name="Rabbinowitsch E."/>
            <person name="Rutherford K.M."/>
            <person name="Rutter S."/>
            <person name="Saunders D."/>
            <person name="Seeger K."/>
            <person name="Sharp S."/>
            <person name="Skelton J."/>
            <person name="Simmonds M.N."/>
            <person name="Squares R."/>
            <person name="Squares S."/>
            <person name="Stevens K."/>
            <person name="Taylor K."/>
            <person name="Taylor R.G."/>
            <person name="Tivey A."/>
            <person name="Walsh S.V."/>
            <person name="Warren T."/>
            <person name="Whitehead S."/>
            <person name="Woodward J.R."/>
            <person name="Volckaert G."/>
            <person name="Aert R."/>
            <person name="Robben J."/>
            <person name="Grymonprez B."/>
            <person name="Weltjens I."/>
            <person name="Vanstreels E."/>
            <person name="Rieger M."/>
            <person name="Schaefer M."/>
            <person name="Mueller-Auer S."/>
            <person name="Gabel C."/>
            <person name="Fuchs M."/>
            <person name="Duesterhoeft A."/>
            <person name="Fritzc C."/>
            <person name="Holzer E."/>
            <person name="Moestl D."/>
            <person name="Hilbert H."/>
            <person name="Borzym K."/>
            <person name="Langer I."/>
            <person name="Beck A."/>
            <person name="Lehrach H."/>
            <person name="Reinhardt R."/>
            <person name="Pohl T.M."/>
            <person name="Eger P."/>
            <person name="Zimmermann W."/>
            <person name="Wedler H."/>
            <person name="Wambutt R."/>
            <person name="Purnelle B."/>
            <person name="Goffeau A."/>
            <person name="Cadieu E."/>
            <person name="Dreano S."/>
            <person name="Gloux S."/>
            <person name="Lelaure V."/>
            <person name="Mottier S."/>
            <person name="Galibert F."/>
            <person name="Aves S.J."/>
            <person name="Xiang Z."/>
            <person name="Hunt C."/>
            <person name="Moore K."/>
            <person name="Hurst S.M."/>
            <person name="Lucas M."/>
            <person name="Rochet M."/>
            <person name="Gaillardin C."/>
            <person name="Tallada V.A."/>
            <person name="Garzon A."/>
            <person name="Thode G."/>
            <person name="Daga R.R."/>
            <person name="Cruzado L."/>
            <person name="Jimenez J."/>
            <person name="Sanchez M."/>
            <person name="del Rey F."/>
            <person name="Benito J."/>
            <person name="Dominguez A."/>
            <person name="Revuelta J.L."/>
            <person name="Moreno S."/>
            <person name="Armstrong J."/>
            <person name="Forsburg S.L."/>
            <person name="Cerutti L."/>
            <person name="Lowe T."/>
            <person name="McCombie W.R."/>
            <person name="Paulsen I."/>
            <person name="Potashkin J."/>
            <person name="Shpakovski G.V."/>
            <person name="Ussery D."/>
            <person name="Barrell B.G."/>
            <person name="Nurse P."/>
        </authorList>
    </citation>
    <scope>NUCLEOTIDE SEQUENCE [LARGE SCALE GENOMIC DNA]</scope>
    <source>
        <strain>972 / ATCC 24843</strain>
    </source>
</reference>
<reference key="2">
    <citation type="journal article" date="1997" name="DNA Res.">
        <title>Identification of open reading frames in Schizosaccharomyces pombe cDNAs.</title>
        <authorList>
            <person name="Yoshioka S."/>
            <person name="Kato K."/>
            <person name="Nakai K."/>
            <person name="Okayama H."/>
            <person name="Nojima H."/>
        </authorList>
    </citation>
    <scope>NUCLEOTIDE SEQUENCE [LARGE SCALE MRNA] OF 27-379</scope>
    <source>
        <strain>PR745</strain>
    </source>
</reference>
<comment type="subcellular location">
    <subcellularLocation>
        <location evidence="2">Nucleus</location>
    </subcellularLocation>
</comment>
<comment type="similarity">
    <text evidence="2">Belongs to the nucleosome assembly protein (NAP) family.</text>
</comment>
<proteinExistence type="evidence at transcript level"/>
<accession>P78920</accession>
<gene>
    <name type="ORF">SPBC2D10.11c</name>
</gene>
<organism>
    <name type="scientific">Schizosaccharomyces pombe (strain 972 / ATCC 24843)</name>
    <name type="common">Fission yeast</name>
    <dbReference type="NCBI Taxonomy" id="284812"/>
    <lineage>
        <taxon>Eukaryota</taxon>
        <taxon>Fungi</taxon>
        <taxon>Dikarya</taxon>
        <taxon>Ascomycota</taxon>
        <taxon>Taphrinomycotina</taxon>
        <taxon>Schizosaccharomycetes</taxon>
        <taxon>Schizosaccharomycetales</taxon>
        <taxon>Schizosaccharomycetaceae</taxon>
        <taxon>Schizosaccharomyces</taxon>
    </lineage>
</organism>
<feature type="chain" id="PRO_0000185660" description="Putative nucleosome assembly protein C2D10.11C">
    <location>
        <begin position="1"/>
        <end position="379"/>
    </location>
</feature>
<feature type="region of interest" description="Disordered" evidence="1">
    <location>
        <begin position="1"/>
        <end position="30"/>
    </location>
</feature>
<feature type="region of interest" description="Disordered" evidence="1">
    <location>
        <begin position="345"/>
        <end position="379"/>
    </location>
</feature>
<feature type="compositionally biased region" description="Basic and acidic residues" evidence="1">
    <location>
        <begin position="1"/>
        <end position="10"/>
    </location>
</feature>
<feature type="compositionally biased region" description="Polar residues" evidence="1">
    <location>
        <begin position="16"/>
        <end position="28"/>
    </location>
</feature>
<evidence type="ECO:0000256" key="1">
    <source>
        <dbReference type="SAM" id="MobiDB-lite"/>
    </source>
</evidence>
<evidence type="ECO:0000305" key="2"/>
<keyword id="KW-0539">Nucleus</keyword>
<keyword id="KW-1185">Reference proteome</keyword>
<dbReference type="EMBL" id="CU329671">
    <property type="protein sequence ID" value="CAA21169.1"/>
    <property type="molecule type" value="Genomic_DNA"/>
</dbReference>
<dbReference type="EMBL" id="D89271">
    <property type="protein sequence ID" value="BAA13932.1"/>
    <property type="molecule type" value="mRNA"/>
</dbReference>
<dbReference type="PIR" id="T40114">
    <property type="entry name" value="T40114"/>
</dbReference>
<dbReference type="SMR" id="P78920"/>
<dbReference type="BioGRID" id="276937">
    <property type="interactions" value="94"/>
</dbReference>
<dbReference type="FunCoup" id="P78920">
    <property type="interactions" value="299"/>
</dbReference>
<dbReference type="IntAct" id="P78920">
    <property type="interactions" value="10"/>
</dbReference>
<dbReference type="STRING" id="284812.P78920"/>
<dbReference type="iPTMnet" id="P78920"/>
<dbReference type="PaxDb" id="4896-SPBC2D10.11c.1"/>
<dbReference type="EnsemblFungi" id="SPBC2D10.11c.1">
    <property type="protein sequence ID" value="SPBC2D10.11c.1:pep"/>
    <property type="gene ID" value="SPBC2D10.11c"/>
</dbReference>
<dbReference type="KEGG" id="spo:2540409"/>
<dbReference type="PomBase" id="SPBC2D10.11c"/>
<dbReference type="VEuPathDB" id="FungiDB:SPBC2D10.11c"/>
<dbReference type="eggNOG" id="KOG1507">
    <property type="taxonomic scope" value="Eukaryota"/>
</dbReference>
<dbReference type="HOGENOM" id="CLU_038841_1_0_1"/>
<dbReference type="InParanoid" id="P78920"/>
<dbReference type="OMA" id="YSGDFMY"/>
<dbReference type="PhylomeDB" id="P78920"/>
<dbReference type="PRO" id="PR:P78920"/>
<dbReference type="Proteomes" id="UP000002485">
    <property type="component" value="Chromosome II"/>
</dbReference>
<dbReference type="GO" id="GO:0000785">
    <property type="term" value="C:chromatin"/>
    <property type="evidence" value="ECO:0000318"/>
    <property type="project" value="GO_Central"/>
</dbReference>
<dbReference type="GO" id="GO:0005737">
    <property type="term" value="C:cytoplasm"/>
    <property type="evidence" value="ECO:0007005"/>
    <property type="project" value="PomBase"/>
</dbReference>
<dbReference type="GO" id="GO:0005829">
    <property type="term" value="C:cytosol"/>
    <property type="evidence" value="ECO:0007005"/>
    <property type="project" value="PomBase"/>
</dbReference>
<dbReference type="GO" id="GO:0005634">
    <property type="term" value="C:nucleus"/>
    <property type="evidence" value="ECO:0007005"/>
    <property type="project" value="PomBase"/>
</dbReference>
<dbReference type="GO" id="GO:0003682">
    <property type="term" value="F:chromatin binding"/>
    <property type="evidence" value="ECO:0000318"/>
    <property type="project" value="GO_Central"/>
</dbReference>
<dbReference type="GO" id="GO:0000511">
    <property type="term" value="F:H2A-H2B histone complex chaperone activity"/>
    <property type="evidence" value="ECO:0000303"/>
    <property type="project" value="PomBase"/>
</dbReference>
<dbReference type="GO" id="GO:0042393">
    <property type="term" value="F:histone binding"/>
    <property type="evidence" value="ECO:0000318"/>
    <property type="project" value="GO_Central"/>
</dbReference>
<dbReference type="GO" id="GO:0006334">
    <property type="term" value="P:nucleosome assembly"/>
    <property type="evidence" value="ECO:0000318"/>
    <property type="project" value="GO_Central"/>
</dbReference>
<dbReference type="FunFam" id="3.30.1120.90:FF:000003">
    <property type="entry name" value="Nucleosome assembly protein"/>
    <property type="match status" value="1"/>
</dbReference>
<dbReference type="FunFam" id="1.20.5.1500:FF:000001">
    <property type="entry name" value="Nucleosome assembly protein 1-like 1"/>
    <property type="match status" value="1"/>
</dbReference>
<dbReference type="Gene3D" id="1.20.5.1500">
    <property type="match status" value="1"/>
</dbReference>
<dbReference type="Gene3D" id="3.30.1120.90">
    <property type="entry name" value="Nucleosome assembly protein"/>
    <property type="match status" value="1"/>
</dbReference>
<dbReference type="InterPro" id="IPR037231">
    <property type="entry name" value="NAP-like_sf"/>
</dbReference>
<dbReference type="InterPro" id="IPR002164">
    <property type="entry name" value="NAP_family"/>
</dbReference>
<dbReference type="PANTHER" id="PTHR11875">
    <property type="entry name" value="TESTIS-SPECIFIC Y-ENCODED PROTEIN"/>
    <property type="match status" value="1"/>
</dbReference>
<dbReference type="Pfam" id="PF00956">
    <property type="entry name" value="NAP"/>
    <property type="match status" value="1"/>
</dbReference>
<dbReference type="SUPFAM" id="SSF143113">
    <property type="entry name" value="NAP-like"/>
    <property type="match status" value="1"/>
</dbReference>
<name>YGNB_SCHPO</name>
<protein>
    <recommendedName>
        <fullName>Putative nucleosome assembly protein C2D10.11C</fullName>
    </recommendedName>
</protein>
<sequence length="379" mass="43371">MSKGPGDFKKSWNGFAAQTPQNTPSSDVHLSKAALEKARQTLQSQLEDKSAHDEVSGLLRNNPAMLSMIEGRLSSLVGKSSGYIESLAPAVQNRITALKGLQKDCDAIQYEFRQKMLDLETKYEKKYQPIFSRRAEIIKGVSEPVDDELDHEEEIFQNNLPDPKGIPEFWLTCLHNVFLVGEMITPEDENVLRSLSDIRFTNLSGDVHGYKLEFEFDSNDYFTNKILTKTYYYKDDLSPSGEFLYDHAEGDKINWIKPEKNLTVRVETKKQRNRKTNQTRLVRTTVPNDSFFNFFSPPQLDDDESDDGLDDKTELLELDYQLGEVFKDQIIPLAIDCFLEEGDLSDFNQMDEEDSEDAYTDEEDLSSDDEEILSSEISD</sequence>